<sequence>MTYLQESSRPAVTVPKLQAMREAGEKIAMLTSYDASFAALLDRANVDVQLIGDSLGNVLQGQATTLPVTLDDIAYHTACVARAQPRGLVVADLPFGTYGTPADAFASAVKLMRAGAQMVKLEGGEWLAETVRFLVERAVPVCAHVGLTPQSVHAFGGFKVQGKTEAGAAQLLRDARAVEEAGAQLIVLEAVPTLVAAEVTRELSIPTIGIGAGAECSGQVLVLHDMLGVFPGKRPRFVKDFMQGQPSIFAAVEAYVRAVKDGSFPGPEHSF</sequence>
<gene>
    <name evidence="1" type="primary">panB</name>
    <name type="ordered locus">BMA2323</name>
</gene>
<comment type="function">
    <text evidence="1">Catalyzes the reversible reaction in which hydroxymethyl group from 5,10-methylenetetrahydrofolate is transferred onto alpha-ketoisovalerate to form ketopantoate.</text>
</comment>
<comment type="catalytic activity">
    <reaction evidence="1">
        <text>3-methyl-2-oxobutanoate + (6R)-5,10-methylene-5,6,7,8-tetrahydrofolate + H2O = 2-dehydropantoate + (6S)-5,6,7,8-tetrahydrofolate</text>
        <dbReference type="Rhea" id="RHEA:11824"/>
        <dbReference type="ChEBI" id="CHEBI:11561"/>
        <dbReference type="ChEBI" id="CHEBI:11851"/>
        <dbReference type="ChEBI" id="CHEBI:15377"/>
        <dbReference type="ChEBI" id="CHEBI:15636"/>
        <dbReference type="ChEBI" id="CHEBI:57453"/>
        <dbReference type="EC" id="2.1.2.11"/>
    </reaction>
</comment>
<comment type="cofactor">
    <cofactor evidence="1">
        <name>Mg(2+)</name>
        <dbReference type="ChEBI" id="CHEBI:18420"/>
    </cofactor>
    <text evidence="1">Binds 1 Mg(2+) ion per subunit.</text>
</comment>
<comment type="pathway">
    <text evidence="1">Cofactor biosynthesis; (R)-pantothenate biosynthesis; (R)-pantoate from 3-methyl-2-oxobutanoate: step 1/2.</text>
</comment>
<comment type="subunit">
    <text evidence="1">Homodecamer; pentamer of dimers.</text>
</comment>
<comment type="subcellular location">
    <subcellularLocation>
        <location evidence="1">Cytoplasm</location>
    </subcellularLocation>
</comment>
<comment type="similarity">
    <text evidence="1">Belongs to the PanB family.</text>
</comment>
<comment type="sequence caution" evidence="2">
    <conflict type="erroneous initiation">
        <sequence resource="EMBL-CDS" id="AAU49787"/>
    </conflict>
</comment>
<evidence type="ECO:0000255" key="1">
    <source>
        <dbReference type="HAMAP-Rule" id="MF_00156"/>
    </source>
</evidence>
<evidence type="ECO:0000305" key="2"/>
<keyword id="KW-0963">Cytoplasm</keyword>
<keyword id="KW-0460">Magnesium</keyword>
<keyword id="KW-0479">Metal-binding</keyword>
<keyword id="KW-0566">Pantothenate biosynthesis</keyword>
<keyword id="KW-1185">Reference proteome</keyword>
<keyword id="KW-0808">Transferase</keyword>
<reference key="1">
    <citation type="journal article" date="2004" name="Proc. Natl. Acad. Sci. U.S.A.">
        <title>Structural flexibility in the Burkholderia mallei genome.</title>
        <authorList>
            <person name="Nierman W.C."/>
            <person name="DeShazer D."/>
            <person name="Kim H.S."/>
            <person name="Tettelin H."/>
            <person name="Nelson K.E."/>
            <person name="Feldblyum T.V."/>
            <person name="Ulrich R.L."/>
            <person name="Ronning C.M."/>
            <person name="Brinkac L.M."/>
            <person name="Daugherty S.C."/>
            <person name="Davidsen T.D."/>
            <person name="DeBoy R.T."/>
            <person name="Dimitrov G."/>
            <person name="Dodson R.J."/>
            <person name="Durkin A.S."/>
            <person name="Gwinn M.L."/>
            <person name="Haft D.H."/>
            <person name="Khouri H.M."/>
            <person name="Kolonay J.F."/>
            <person name="Madupu R."/>
            <person name="Mohammoud Y."/>
            <person name="Nelson W.C."/>
            <person name="Radune D."/>
            <person name="Romero C.M."/>
            <person name="Sarria S."/>
            <person name="Selengut J."/>
            <person name="Shamblin C."/>
            <person name="Sullivan S.A."/>
            <person name="White O."/>
            <person name="Yu Y."/>
            <person name="Zafar N."/>
            <person name="Zhou L."/>
            <person name="Fraser C.M."/>
        </authorList>
    </citation>
    <scope>NUCLEOTIDE SEQUENCE [LARGE SCALE GENOMIC DNA]</scope>
    <source>
        <strain>ATCC 23344</strain>
    </source>
</reference>
<feature type="chain" id="PRO_0000184830" description="3-methyl-2-oxobutanoate hydroxymethyltransferase">
    <location>
        <begin position="1"/>
        <end position="271"/>
    </location>
</feature>
<feature type="active site" description="Proton acceptor" evidence="1">
    <location>
        <position position="189"/>
    </location>
</feature>
<feature type="binding site" evidence="1">
    <location>
        <begin position="53"/>
        <end position="54"/>
    </location>
    <ligand>
        <name>3-methyl-2-oxobutanoate</name>
        <dbReference type="ChEBI" id="CHEBI:11851"/>
    </ligand>
</feature>
<feature type="binding site" evidence="1">
    <location>
        <position position="53"/>
    </location>
    <ligand>
        <name>Mg(2+)</name>
        <dbReference type="ChEBI" id="CHEBI:18420"/>
    </ligand>
</feature>
<feature type="binding site" evidence="1">
    <location>
        <position position="92"/>
    </location>
    <ligand>
        <name>3-methyl-2-oxobutanoate</name>
        <dbReference type="ChEBI" id="CHEBI:11851"/>
    </ligand>
</feature>
<feature type="binding site" evidence="1">
    <location>
        <position position="92"/>
    </location>
    <ligand>
        <name>Mg(2+)</name>
        <dbReference type="ChEBI" id="CHEBI:18420"/>
    </ligand>
</feature>
<feature type="binding site" evidence="1">
    <location>
        <position position="120"/>
    </location>
    <ligand>
        <name>3-methyl-2-oxobutanoate</name>
        <dbReference type="ChEBI" id="CHEBI:11851"/>
    </ligand>
</feature>
<feature type="binding site" evidence="1">
    <location>
        <position position="122"/>
    </location>
    <ligand>
        <name>Mg(2+)</name>
        <dbReference type="ChEBI" id="CHEBI:18420"/>
    </ligand>
</feature>
<protein>
    <recommendedName>
        <fullName evidence="1">3-methyl-2-oxobutanoate hydroxymethyltransferase</fullName>
        <ecNumber evidence="1">2.1.2.11</ecNumber>
    </recommendedName>
    <alternativeName>
        <fullName evidence="1">Ketopantoate hydroxymethyltransferase</fullName>
        <shortName evidence="1">KPHMT</shortName>
    </alternativeName>
</protein>
<proteinExistence type="inferred from homology"/>
<organism>
    <name type="scientific">Burkholderia mallei (strain ATCC 23344)</name>
    <dbReference type="NCBI Taxonomy" id="243160"/>
    <lineage>
        <taxon>Bacteria</taxon>
        <taxon>Pseudomonadati</taxon>
        <taxon>Pseudomonadota</taxon>
        <taxon>Betaproteobacteria</taxon>
        <taxon>Burkholderiales</taxon>
        <taxon>Burkholderiaceae</taxon>
        <taxon>Burkholderia</taxon>
        <taxon>pseudomallei group</taxon>
    </lineage>
</organism>
<name>PANB_BURMA</name>
<dbReference type="EC" id="2.1.2.11" evidence="1"/>
<dbReference type="EMBL" id="CP000010">
    <property type="protein sequence ID" value="AAU49787.1"/>
    <property type="status" value="ALT_INIT"/>
    <property type="molecule type" value="Genomic_DNA"/>
</dbReference>
<dbReference type="RefSeq" id="WP_004194137.1">
    <property type="nucleotide sequence ID" value="NC_006348.1"/>
</dbReference>
<dbReference type="RefSeq" id="YP_103882.1">
    <property type="nucleotide sequence ID" value="NC_006348.1"/>
</dbReference>
<dbReference type="SMR" id="Q62HD8"/>
<dbReference type="GeneID" id="93061412"/>
<dbReference type="KEGG" id="bma:BMA2323"/>
<dbReference type="PATRIC" id="fig|243160.12.peg.2390"/>
<dbReference type="eggNOG" id="COG0413">
    <property type="taxonomic scope" value="Bacteria"/>
</dbReference>
<dbReference type="HOGENOM" id="CLU_036645_1_0_4"/>
<dbReference type="UniPathway" id="UPA00028">
    <property type="reaction ID" value="UER00003"/>
</dbReference>
<dbReference type="Proteomes" id="UP000006693">
    <property type="component" value="Chromosome 1"/>
</dbReference>
<dbReference type="GO" id="GO:0005737">
    <property type="term" value="C:cytoplasm"/>
    <property type="evidence" value="ECO:0007669"/>
    <property type="project" value="UniProtKB-SubCell"/>
</dbReference>
<dbReference type="GO" id="GO:0003864">
    <property type="term" value="F:3-methyl-2-oxobutanoate hydroxymethyltransferase activity"/>
    <property type="evidence" value="ECO:0007669"/>
    <property type="project" value="UniProtKB-UniRule"/>
</dbReference>
<dbReference type="GO" id="GO:0000287">
    <property type="term" value="F:magnesium ion binding"/>
    <property type="evidence" value="ECO:0007669"/>
    <property type="project" value="TreeGrafter"/>
</dbReference>
<dbReference type="GO" id="GO:0015940">
    <property type="term" value="P:pantothenate biosynthetic process"/>
    <property type="evidence" value="ECO:0007669"/>
    <property type="project" value="UniProtKB-UniRule"/>
</dbReference>
<dbReference type="CDD" id="cd06557">
    <property type="entry name" value="KPHMT-like"/>
    <property type="match status" value="1"/>
</dbReference>
<dbReference type="FunFam" id="3.20.20.60:FF:000003">
    <property type="entry name" value="3-methyl-2-oxobutanoate hydroxymethyltransferase"/>
    <property type="match status" value="1"/>
</dbReference>
<dbReference type="Gene3D" id="3.20.20.60">
    <property type="entry name" value="Phosphoenolpyruvate-binding domains"/>
    <property type="match status" value="1"/>
</dbReference>
<dbReference type="HAMAP" id="MF_00156">
    <property type="entry name" value="PanB"/>
    <property type="match status" value="1"/>
</dbReference>
<dbReference type="InterPro" id="IPR003700">
    <property type="entry name" value="Pantoate_hydroxy_MeTrfase"/>
</dbReference>
<dbReference type="InterPro" id="IPR015813">
    <property type="entry name" value="Pyrv/PenolPyrv_kinase-like_dom"/>
</dbReference>
<dbReference type="InterPro" id="IPR040442">
    <property type="entry name" value="Pyrv_kinase-like_dom_sf"/>
</dbReference>
<dbReference type="NCBIfam" id="TIGR00222">
    <property type="entry name" value="panB"/>
    <property type="match status" value="1"/>
</dbReference>
<dbReference type="NCBIfam" id="NF001452">
    <property type="entry name" value="PRK00311.1"/>
    <property type="match status" value="1"/>
</dbReference>
<dbReference type="PANTHER" id="PTHR20881">
    <property type="entry name" value="3-METHYL-2-OXOBUTANOATE HYDROXYMETHYLTRANSFERASE"/>
    <property type="match status" value="1"/>
</dbReference>
<dbReference type="PANTHER" id="PTHR20881:SF0">
    <property type="entry name" value="3-METHYL-2-OXOBUTANOATE HYDROXYMETHYLTRANSFERASE"/>
    <property type="match status" value="1"/>
</dbReference>
<dbReference type="Pfam" id="PF02548">
    <property type="entry name" value="Pantoate_transf"/>
    <property type="match status" value="1"/>
</dbReference>
<dbReference type="PIRSF" id="PIRSF000388">
    <property type="entry name" value="Pantoate_hydroxy_MeTrfase"/>
    <property type="match status" value="1"/>
</dbReference>
<dbReference type="SUPFAM" id="SSF51621">
    <property type="entry name" value="Phosphoenolpyruvate/pyruvate domain"/>
    <property type="match status" value="1"/>
</dbReference>
<accession>Q62HD8</accession>